<comment type="function">
    <text evidence="1">Functions in complex with FlhC as a master transcriptional regulator that regulates transcription of several flagellar and non-flagellar operons by binding to their promoter region. Activates expression of class 2 flagellar genes, including fliA, which is a flagellum-specific sigma factor that turns on the class 3 genes. Also regulates genes whose products function in a variety of physiological pathways.</text>
</comment>
<comment type="subunit">
    <text evidence="1">Homodimer; disulfide-linked. Forms a heterohexamer composed of two FlhC and four FlhD subunits. Each FlhC binds a FlhD dimer, forming a heterotrimer, and a hexamer assembles by dimerization of two heterotrimers.</text>
</comment>
<comment type="subcellular location">
    <subcellularLocation>
        <location evidence="1">Cytoplasm</location>
    </subcellularLocation>
</comment>
<comment type="domain">
    <text evidence="1">The C-terminal region contains a putative helix-turn-helix (HTH) motif, suggesting that this region may bind DNA.</text>
</comment>
<comment type="similarity">
    <text evidence="1">Belongs to the FlhD family.</text>
</comment>
<comment type="sequence caution" evidence="2">
    <conflict type="erroneous initiation">
        <sequence resource="EMBL-CDS" id="AAO68625"/>
    </conflict>
    <text>Extended N-terminus.</text>
</comment>
<comment type="sequence caution" evidence="2">
    <conflict type="erroneous initiation">
        <sequence resource="EMBL-CDS" id="CAD05676"/>
    </conflict>
    <text>Extended N-terminus.</text>
</comment>
<accession>P0A2R3</accession>
<accession>O52221</accession>
<organism>
    <name type="scientific">Salmonella typhi</name>
    <dbReference type="NCBI Taxonomy" id="90370"/>
    <lineage>
        <taxon>Bacteria</taxon>
        <taxon>Pseudomonadati</taxon>
        <taxon>Pseudomonadota</taxon>
        <taxon>Gammaproteobacteria</taxon>
        <taxon>Enterobacterales</taxon>
        <taxon>Enterobacteriaceae</taxon>
        <taxon>Salmonella</taxon>
    </lineage>
</organism>
<proteinExistence type="inferred from homology"/>
<evidence type="ECO:0000255" key="1">
    <source>
        <dbReference type="HAMAP-Rule" id="MF_00725"/>
    </source>
</evidence>
<evidence type="ECO:0000305" key="2"/>
<protein>
    <recommendedName>
        <fullName evidence="1">Flagellar transcriptional regulator FlhD</fullName>
    </recommendedName>
</protein>
<dbReference type="EMBL" id="AL513382">
    <property type="protein sequence ID" value="CAD05676.1"/>
    <property type="status" value="ALT_INIT"/>
    <property type="molecule type" value="Genomic_DNA"/>
</dbReference>
<dbReference type="EMBL" id="AE014613">
    <property type="protein sequence ID" value="AAO68625.1"/>
    <property type="status" value="ALT_INIT"/>
    <property type="molecule type" value="Genomic_DNA"/>
</dbReference>
<dbReference type="RefSeq" id="NP_456491.1">
    <property type="nucleotide sequence ID" value="NC_003198.1"/>
</dbReference>
<dbReference type="RefSeq" id="WP_001518146.1">
    <property type="nucleotide sequence ID" value="NZ_WSUR01000004.1"/>
</dbReference>
<dbReference type="SMR" id="P0A2R3"/>
<dbReference type="STRING" id="220341.gene:17586041"/>
<dbReference type="KEGG" id="stt:t0952"/>
<dbReference type="KEGG" id="sty:STY2134"/>
<dbReference type="PATRIC" id="fig|220341.7.peg.2146"/>
<dbReference type="eggNOG" id="ENOG5031P80">
    <property type="taxonomic scope" value="Bacteria"/>
</dbReference>
<dbReference type="HOGENOM" id="CLU_144160_0_0_6"/>
<dbReference type="OMA" id="REDKPMG"/>
<dbReference type="Proteomes" id="UP000000541">
    <property type="component" value="Chromosome"/>
</dbReference>
<dbReference type="Proteomes" id="UP000002670">
    <property type="component" value="Chromosome"/>
</dbReference>
<dbReference type="GO" id="GO:0005737">
    <property type="term" value="C:cytoplasm"/>
    <property type="evidence" value="ECO:0007669"/>
    <property type="project" value="UniProtKB-SubCell"/>
</dbReference>
<dbReference type="GO" id="GO:0003677">
    <property type="term" value="F:DNA binding"/>
    <property type="evidence" value="ECO:0007669"/>
    <property type="project" value="UniProtKB-UniRule"/>
</dbReference>
<dbReference type="GO" id="GO:0044780">
    <property type="term" value="P:bacterial-type flagellum assembly"/>
    <property type="evidence" value="ECO:0007669"/>
    <property type="project" value="InterPro"/>
</dbReference>
<dbReference type="GO" id="GO:0045893">
    <property type="term" value="P:positive regulation of DNA-templated transcription"/>
    <property type="evidence" value="ECO:0007669"/>
    <property type="project" value="InterPro"/>
</dbReference>
<dbReference type="GO" id="GO:1902208">
    <property type="term" value="P:regulation of bacterial-type flagellum assembly"/>
    <property type="evidence" value="ECO:0007669"/>
    <property type="project" value="UniProtKB-UniRule"/>
</dbReference>
<dbReference type="Gene3D" id="1.10.4000.10">
    <property type="entry name" value="Flagellar transcriptional activator FlhD"/>
    <property type="match status" value="1"/>
</dbReference>
<dbReference type="HAMAP" id="MF_00725">
    <property type="entry name" value="FlhD"/>
    <property type="match status" value="1"/>
</dbReference>
<dbReference type="InterPro" id="IPR023559">
    <property type="entry name" value="Flagellar_FlhD"/>
</dbReference>
<dbReference type="InterPro" id="IPR036194">
    <property type="entry name" value="FlhD_sf"/>
</dbReference>
<dbReference type="NCBIfam" id="NF002783">
    <property type="entry name" value="PRK02909.1-1"/>
    <property type="match status" value="1"/>
</dbReference>
<dbReference type="Pfam" id="PF05247">
    <property type="entry name" value="FlhD"/>
    <property type="match status" value="1"/>
</dbReference>
<dbReference type="SUPFAM" id="SSF63592">
    <property type="entry name" value="Flagellar transcriptional activator FlhD"/>
    <property type="match status" value="1"/>
</dbReference>
<reference key="1">
    <citation type="journal article" date="2001" name="Nature">
        <title>Complete genome sequence of a multiple drug resistant Salmonella enterica serovar Typhi CT18.</title>
        <authorList>
            <person name="Parkhill J."/>
            <person name="Dougan G."/>
            <person name="James K.D."/>
            <person name="Thomson N.R."/>
            <person name="Pickard D."/>
            <person name="Wain J."/>
            <person name="Churcher C.M."/>
            <person name="Mungall K.L."/>
            <person name="Bentley S.D."/>
            <person name="Holden M.T.G."/>
            <person name="Sebaihia M."/>
            <person name="Baker S."/>
            <person name="Basham D."/>
            <person name="Brooks K."/>
            <person name="Chillingworth T."/>
            <person name="Connerton P."/>
            <person name="Cronin A."/>
            <person name="Davis P."/>
            <person name="Davies R.M."/>
            <person name="Dowd L."/>
            <person name="White N."/>
            <person name="Farrar J."/>
            <person name="Feltwell T."/>
            <person name="Hamlin N."/>
            <person name="Haque A."/>
            <person name="Hien T.T."/>
            <person name="Holroyd S."/>
            <person name="Jagels K."/>
            <person name="Krogh A."/>
            <person name="Larsen T.S."/>
            <person name="Leather S."/>
            <person name="Moule S."/>
            <person name="O'Gaora P."/>
            <person name="Parry C."/>
            <person name="Quail M.A."/>
            <person name="Rutherford K.M."/>
            <person name="Simmonds M."/>
            <person name="Skelton J."/>
            <person name="Stevens K."/>
            <person name="Whitehead S."/>
            <person name="Barrell B.G."/>
        </authorList>
    </citation>
    <scope>NUCLEOTIDE SEQUENCE [LARGE SCALE GENOMIC DNA]</scope>
    <source>
        <strain>CT18</strain>
    </source>
</reference>
<reference key="2">
    <citation type="journal article" date="2003" name="J. Bacteriol.">
        <title>Comparative genomics of Salmonella enterica serovar Typhi strains Ty2 and CT18.</title>
        <authorList>
            <person name="Deng W."/>
            <person name="Liou S.-R."/>
            <person name="Plunkett G. III"/>
            <person name="Mayhew G.F."/>
            <person name="Rose D.J."/>
            <person name="Burland V."/>
            <person name="Kodoyianni V."/>
            <person name="Schwartz D.C."/>
            <person name="Blattner F.R."/>
        </authorList>
    </citation>
    <scope>NUCLEOTIDE SEQUENCE [LARGE SCALE GENOMIC DNA]</scope>
    <source>
        <strain>ATCC 700931 / Ty2</strain>
    </source>
</reference>
<keyword id="KW-0010">Activator</keyword>
<keyword id="KW-1005">Bacterial flagellum biogenesis</keyword>
<keyword id="KW-0963">Cytoplasm</keyword>
<keyword id="KW-1015">Disulfide bond</keyword>
<keyword id="KW-0238">DNA-binding</keyword>
<keyword id="KW-0804">Transcription</keyword>
<keyword id="KW-0805">Transcription regulation</keyword>
<sequence length="113" mass="13006">MHTSELLKHIYDINLSYLLLAQRLIVQDKASAMFRLGINEEMANTLGALTLPQMVKLAETNQLVCHFRFDDHQTITRLTQDSRVDDLQQIHTGIMLSTRLLNEVDDTARKKRA</sequence>
<name>FLHD_SALTI</name>
<feature type="chain" id="PRO_0000182724" description="Flagellar transcriptional regulator FlhD">
    <location>
        <begin position="1"/>
        <end position="113"/>
    </location>
</feature>
<feature type="disulfide bond" description="Interchain" evidence="1">
    <location>
        <position position="65"/>
    </location>
</feature>
<gene>
    <name evidence="1" type="primary">flhD</name>
    <name type="ordered locus">STY2134</name>
    <name type="ordered locus">t0952</name>
</gene>